<proteinExistence type="evidence at protein level"/>
<gene>
    <name type="primary">emr-1</name>
    <name type="ORF">M01D7.6</name>
</gene>
<evidence type="ECO:0000255" key="1"/>
<evidence type="ECO:0000255" key="2">
    <source>
        <dbReference type="PROSITE-ProRule" id="PRU00313"/>
    </source>
</evidence>
<evidence type="ECO:0000256" key="3">
    <source>
        <dbReference type="SAM" id="MobiDB-lite"/>
    </source>
</evidence>
<evidence type="ECO:0000269" key="4">
    <source>
    </source>
</evidence>
<evidence type="ECO:0000269" key="5">
    <source>
    </source>
</evidence>
<evidence type="ECO:0000269" key="6">
    <source>
    </source>
</evidence>
<evidence type="ECO:0000269" key="7">
    <source>
    </source>
</evidence>
<evidence type="ECO:0000269" key="8">
    <source>
    </source>
</evidence>
<evidence type="ECO:0000269" key="9">
    <source>
    </source>
</evidence>
<evidence type="ECO:0000269" key="10">
    <source>
    </source>
</evidence>
<evidence type="ECO:0000269" key="11">
    <source>
    </source>
</evidence>
<evidence type="ECO:0000269" key="12">
    <source>
    </source>
</evidence>
<comment type="function">
    <text evidence="5 7 9 10 11">Nuclear lamina-associated inner nuclear membrane protein that is involved in cell division, nuclear structure organization, maintenance of nuclear envelope integrity and nuclear envelope reformation after mitosis (PubMed:11870211, PubMed:12684533, PubMed:22171324). Involved in chromosome segregation and cell division, probably via its interaction with the nuclear intermediate filament protein lmn-1, the main component of nuclear lamina (PubMed:11870211, PubMed:12684533). Required to organize the distribution of lmn-1, nuclear pore complexes (NPCs) and chromatin in mitotically active cells (PubMed:22171324). Together with lem-2, plays a role in baf-1 enrichment at the nuclear envelope in anaphase (PubMed:12684533). Together with lem-2, involved in muscle cell attachment to hypodermal cells, as well as muscle cell location and sarcomere organization (PubMed:22171324). May play a role in radiation-induced DNA damage repair response (PubMed:22383942). May repress binding of transcription factor pha-4 with target sequences in pharyngeal cells.</text>
</comment>
<comment type="subunit">
    <text evidence="5 7">Interacts with lmn-1 and baf-1.</text>
</comment>
<comment type="subcellular location">
    <subcellularLocation>
        <location evidence="4 5 6">Nucleus inner membrane</location>
        <topology evidence="4 5 6">Single-pass membrane protein</topology>
        <orientation evidence="4 5 6">Nucleoplasmic side</orientation>
    </subcellularLocation>
    <subcellularLocation>
        <location evidence="8 12">Nucleus envelope</location>
    </subcellularLocation>
    <text evidence="4 5 8 12">Lmn-1 and mel-28 are required for its localization to the nuclear envelope (PubMed:11870211, PubMed:16950114). Remains in the nuclear envelope until mid-late anaphase (PubMed:10982402). Recruited to the reforming nuclear envelope from telophase and throughout interphase (PubMed:25653391).</text>
</comment>
<comment type="tissue specificity">
    <text evidence="5 12">Ubiquitous (PubMed:11870211, PubMed:25653391). Expressed in all cells, except in cells undergoing spermatogenesis (PubMed:11870211). High expression in hypodermis, neurons, pharyngeal muscle, body wall muscle and gonadal sheath (PubMed:25653391).</text>
</comment>
<comment type="developmental stage">
    <text evidence="5">Expressed throughout the development and in adults.</text>
</comment>
<comment type="disruption phenotype">
    <text evidence="7 9 10 11 12">Mild increase in embryonic lethality of progeny of X-ray-irradiated adults (PubMed:22383942). Slightly more spherical nuclei (PubMed:25653391). Simultaneous knockout of emr-1 and lem-2 leads to embryonic lethality, 8.5% shorter animals in larval stage L2, abnormal gonads and a developmental stop at late L2/early L3 (PubMed:22171324). Missing cell divisions in the postembryonic mesodermal lineage and failure to produce any of the differentiated M lineage cells (PubMed:22171324). Defects in the organization of chromatin, nuclear intermediate filaments, and nuclear pore complexes (NPCs), and defects in mitosis in cells that continue to divide after embryogenesis (PubMed:22171324). In the mitotic zone of the gonad, lmn-1 and NPCs are mislocalized and nuclei are misshaped (PubMed:22171324). Misshaped nuclei with large lmn-1 aggregates, clustered NPCs and condensed chromatin in somatic hypodermal cells (PubMed:22171324). Defects in motility, sarcomere organization, and muscle attachment to hypodermis (PubMed:22171324). Decreased motility and near paralysis at day 6 (PubMed:22171324). Disorganized thin and thick filaments of sarcomeres and abnormally positioned muscles at day 3 and 6 (PubMed:22171324). Decreased pumping rate of the pharynx (PubMed:22171324). RNAi-mediated knockdown causes an increase in the number of nuclei with pha-4 bound to the pax-1 promoter; observed in pharyngeal but not intestinal cells (PubMed:20714352). Simultaneous RNAi-mediated knockdown of lem-2 and emr-1 causes anaphase chromatin bridges and redistribution of baf-1 from the nuclear periphery to the segregating chromatin during anaphase (PubMed:12684533).</text>
</comment>
<reference key="1">
    <citation type="journal article" date="1998" name="Science">
        <title>Genome sequence of the nematode C. elegans: a platform for investigating biology.</title>
        <authorList>
            <consortium name="The C. elegans sequencing consortium"/>
        </authorList>
    </citation>
    <scope>NUCLEOTIDE SEQUENCE [LARGE SCALE GENOMIC DNA]</scope>
    <source>
        <strain>Bristol N2</strain>
    </source>
</reference>
<reference key="2">
    <citation type="journal article" date="2000" name="Mol. Biol. Cell">
        <title>C. elegans nuclear envelope proteins emerin, MAN1, lamin, and nucleoporins reveal unique timing of nuclear envelope breakdown during mitosis.</title>
        <authorList>
            <person name="Lee K.K."/>
            <person name="Gruenbaum Y."/>
            <person name="Spann P."/>
            <person name="Liu J."/>
            <person name="Wilson K.L."/>
        </authorList>
    </citation>
    <scope>SUBCELLULAR LOCATION</scope>
</reference>
<reference key="3">
    <citation type="journal article" date="2002" name="J. Cell Sci.">
        <title>The expression, lamin-dependent localization and RNAi depletion phenotype for emerin in C. elegans.</title>
        <authorList>
            <person name="Gruenbaum Y."/>
            <person name="Lee K.K."/>
            <person name="Liu J."/>
            <person name="Cohen M."/>
            <person name="Wilson K.L."/>
        </authorList>
    </citation>
    <scope>FUNCTION</scope>
    <scope>SUBCELLULAR LOCATION</scope>
    <scope>TISSUE SPECIFICITY</scope>
    <scope>DEVELOPMENTAL STAGE</scope>
    <scope>INTERACTION WITH LMN-1</scope>
</reference>
<reference key="4">
    <citation type="journal article" date="2002" name="J. Struct. Biol.">
        <title>Transmission electron microscope studies of the nuclear envelope in Caenorhabditis elegans embryos.</title>
        <authorList>
            <person name="Cohen M."/>
            <person name="Tzur Y.B."/>
            <person name="Neufeld E."/>
            <person name="Feinstein N."/>
            <person name="Delannoy M.R."/>
            <person name="Wilson K.L."/>
            <person name="Gruenbaum Y."/>
        </authorList>
    </citation>
    <scope>SUBCELLULAR LOCATION</scope>
</reference>
<reference key="5">
    <citation type="journal article" date="2003" name="Proc. Natl. Acad. Sci. U.S.A.">
        <title>MAN1 and emerin have overlapping function(s) essential for chromosome segregation and cell division in Caenorhabditis elegans.</title>
        <authorList>
            <person name="Liu J."/>
            <person name="Lee K.K."/>
            <person name="Segura-Totten M."/>
            <person name="Neufeld E."/>
            <person name="Wilson K.L."/>
            <person name="Gruenbaum Y."/>
        </authorList>
    </citation>
    <scope>FUNCTION</scope>
    <scope>INTERACTION WITH LMN-1 AND BAF-1</scope>
    <scope>DISRUPTION PHENOTYPE</scope>
</reference>
<reference key="6">
    <citation type="journal article" date="2006" name="Curr. Biol.">
        <title>MEL-28, a novel nuclear-envelope and kinetochore protein essential for zygotic nuclear-envelope assembly in C. elegans.</title>
        <authorList>
            <person name="Galy V."/>
            <person name="Askjaer P."/>
            <person name="Franz C."/>
            <person name="Lopez-Iglesias C."/>
            <person name="Mattaj I.W."/>
        </authorList>
    </citation>
    <scope>SUBCELLULAR LOCATION</scope>
</reference>
<reference key="7">
    <citation type="journal article" date="2010" name="PLoS Genet.">
        <title>Dynamic chromatin organization during foregut development mediated by the organ selector gene PHA-4/FoxA.</title>
        <authorList>
            <person name="Fakhouri T.H."/>
            <person name="Stevenson J."/>
            <person name="Chisholm A.D."/>
            <person name="Mango S.E."/>
        </authorList>
    </citation>
    <scope>FUNCTION</scope>
    <scope>DISRUPTION PHENOTYPE</scope>
</reference>
<reference key="8">
    <citation type="journal article" date="2012" name="Mol. Biol. Cell">
        <title>Ce-emerin and LEM-2: essential roles in Caenorhabditis elegans development, muscle function, and mitosis.</title>
        <authorList>
            <person name="Barkan R."/>
            <person name="Zahand A.J."/>
            <person name="Sharabi K."/>
            <person name="Lamm A.T."/>
            <person name="Feinstein N."/>
            <person name="Haithcock E."/>
            <person name="Wilson K.L."/>
            <person name="Liu J."/>
            <person name="Gruenbaum Y."/>
        </authorList>
    </citation>
    <scope>FUNCTION</scope>
    <scope>DISRUPTION PHENOTYPE</scope>
</reference>
<reference key="9">
    <citation type="journal article" date="2012" name="PLoS ONE">
        <title>LEM-3 - a LEM domain containing nuclease involved in the DNA damage response in C. elegans.</title>
        <authorList>
            <person name="Dittrich C.M."/>
            <person name="Kratz K."/>
            <person name="Sendoel A."/>
            <person name="Gruenbaum Y."/>
            <person name="Jiricny J."/>
            <person name="Hengartner M.O."/>
        </authorList>
    </citation>
    <scope>FUNCTION</scope>
    <scope>DISRUPTION PHENOTYPE</scope>
</reference>
<reference key="10">
    <citation type="journal article" date="2015" name="J. Cell Sci.">
        <title>Inner nuclear membrane protein LEM-2 is required for correct nuclear separation and morphology in C. elegans.</title>
        <authorList>
            <person name="Morales-Martinez A."/>
            <person name="Dobrzynska A."/>
            <person name="Askjaer P."/>
        </authorList>
    </citation>
    <scope>SUBCELLULAR LOCATION</scope>
    <scope>TISSUE SPECIFICITY</scope>
    <scope>DISRUPTION PHENOTYPE</scope>
</reference>
<protein>
    <recommendedName>
        <fullName>Emerin homolog 1</fullName>
    </recommendedName>
    <alternativeName>
        <fullName>Ce-emerin</fullName>
    </alternativeName>
</protein>
<feature type="chain" id="PRO_0000206143" description="Emerin homolog 1">
    <location>
        <begin position="1"/>
        <end position="166"/>
    </location>
</feature>
<feature type="topological domain" description="Nuclear" evidence="1">
    <location>
        <begin position="1"/>
        <end position="127"/>
    </location>
</feature>
<feature type="transmembrane region" description="Helical" evidence="1">
    <location>
        <begin position="128"/>
        <end position="148"/>
    </location>
</feature>
<feature type="topological domain" description="Perinuclear space" evidence="1">
    <location>
        <begin position="149"/>
        <end position="166"/>
    </location>
</feature>
<feature type="domain" description="LEM" evidence="2">
    <location>
        <begin position="1"/>
        <end position="44"/>
    </location>
</feature>
<feature type="region of interest" description="Disordered" evidence="3">
    <location>
        <begin position="62"/>
        <end position="99"/>
    </location>
</feature>
<dbReference type="EMBL" id="FO080941">
    <property type="protein sequence ID" value="CCD67954.1"/>
    <property type="molecule type" value="Genomic_DNA"/>
</dbReference>
<dbReference type="PIR" id="T15287">
    <property type="entry name" value="T15287"/>
</dbReference>
<dbReference type="RefSeq" id="NP_490907.1">
    <property type="nucleotide sequence ID" value="NM_058506.6"/>
</dbReference>
<dbReference type="SMR" id="O01971"/>
<dbReference type="BioGRID" id="37242">
    <property type="interactions" value="5"/>
</dbReference>
<dbReference type="FunCoup" id="O01971">
    <property type="interactions" value="80"/>
</dbReference>
<dbReference type="IntAct" id="O01971">
    <property type="interactions" value="1"/>
</dbReference>
<dbReference type="STRING" id="6239.M01D7.6.1"/>
<dbReference type="iPTMnet" id="O01971"/>
<dbReference type="PaxDb" id="6239-M01D7.6.1"/>
<dbReference type="PeptideAtlas" id="O01971"/>
<dbReference type="EnsemblMetazoa" id="M01D7.6.1">
    <property type="protein sequence ID" value="M01D7.6.1"/>
    <property type="gene ID" value="WBGene00001309"/>
</dbReference>
<dbReference type="EnsemblMetazoa" id="M01D7.6.2">
    <property type="protein sequence ID" value="M01D7.6.2"/>
    <property type="gene ID" value="WBGene00001309"/>
</dbReference>
<dbReference type="GeneID" id="171752"/>
<dbReference type="KEGG" id="cel:CELE_M01D7.6"/>
<dbReference type="UCSC" id="M01D7.6.1">
    <property type="organism name" value="c. elegans"/>
</dbReference>
<dbReference type="AGR" id="WB:WBGene00001309"/>
<dbReference type="CTD" id="171752"/>
<dbReference type="WormBase" id="M01D7.6">
    <property type="protein sequence ID" value="CE12270"/>
    <property type="gene ID" value="WBGene00001309"/>
    <property type="gene designation" value="emr-1"/>
</dbReference>
<dbReference type="eggNOG" id="ENOG502QWCI">
    <property type="taxonomic scope" value="Eukaryota"/>
</dbReference>
<dbReference type="GeneTree" id="ENSGT00940000154098"/>
<dbReference type="HOGENOM" id="CLU_1429189_0_0_1"/>
<dbReference type="InParanoid" id="O01971"/>
<dbReference type="OMA" id="DCEESMR"/>
<dbReference type="OrthoDB" id="6363067at2759"/>
<dbReference type="PRO" id="PR:O01971"/>
<dbReference type="Proteomes" id="UP000001940">
    <property type="component" value="Chromosome I"/>
</dbReference>
<dbReference type="Bgee" id="WBGene00001309">
    <property type="expression patterns" value="Expressed in embryo and 4 other cell types or tissues"/>
</dbReference>
<dbReference type="GO" id="GO:0005635">
    <property type="term" value="C:nuclear envelope"/>
    <property type="evidence" value="ECO:0000314"/>
    <property type="project" value="UniProtKB"/>
</dbReference>
<dbReference type="GO" id="GO:0005637">
    <property type="term" value="C:nuclear inner membrane"/>
    <property type="evidence" value="ECO:0000314"/>
    <property type="project" value="WormBase"/>
</dbReference>
<dbReference type="GO" id="GO:0005521">
    <property type="term" value="F:lamin binding"/>
    <property type="evidence" value="ECO:0000353"/>
    <property type="project" value="WormBase"/>
</dbReference>
<dbReference type="GO" id="GO:0007059">
    <property type="term" value="P:chromosome segregation"/>
    <property type="evidence" value="ECO:0000316"/>
    <property type="project" value="WormBase"/>
</dbReference>
<dbReference type="GO" id="GO:0000281">
    <property type="term" value="P:mitotic cytokinesis"/>
    <property type="evidence" value="ECO:0000316"/>
    <property type="project" value="WormBase"/>
</dbReference>
<dbReference type="GO" id="GO:0006998">
    <property type="term" value="P:nuclear envelope organization"/>
    <property type="evidence" value="ECO:0000315"/>
    <property type="project" value="UniProtKB"/>
</dbReference>
<dbReference type="GO" id="GO:0010165">
    <property type="term" value="P:response to X-ray"/>
    <property type="evidence" value="ECO:0000315"/>
    <property type="project" value="WormBase"/>
</dbReference>
<dbReference type="CDD" id="cd12940">
    <property type="entry name" value="LEM_LAP2_LEMD1"/>
    <property type="match status" value="1"/>
</dbReference>
<dbReference type="FunFam" id="1.10.720.40:FF:000002">
    <property type="entry name" value="Thymopoietin isoform alpha"/>
    <property type="match status" value="1"/>
</dbReference>
<dbReference type="Gene3D" id="1.10.720.40">
    <property type="match status" value="1"/>
</dbReference>
<dbReference type="InterPro" id="IPR011015">
    <property type="entry name" value="LEM/LEM-like_dom_sf"/>
</dbReference>
<dbReference type="InterPro" id="IPR003887">
    <property type="entry name" value="LEM_dom"/>
</dbReference>
<dbReference type="InterPro" id="IPR051656">
    <property type="entry name" value="LEM_domain"/>
</dbReference>
<dbReference type="PANTHER" id="PTHR12019">
    <property type="entry name" value="LAMINA-ASSOCIATED POLYPEPTIDE THYMOPOIETIN"/>
    <property type="match status" value="1"/>
</dbReference>
<dbReference type="PANTHER" id="PTHR12019:SF9">
    <property type="entry name" value="THYMOPOIETIN"/>
    <property type="match status" value="1"/>
</dbReference>
<dbReference type="Pfam" id="PF03020">
    <property type="entry name" value="LEM"/>
    <property type="match status" value="1"/>
</dbReference>
<dbReference type="SMART" id="SM00540">
    <property type="entry name" value="LEM"/>
    <property type="match status" value="1"/>
</dbReference>
<dbReference type="SUPFAM" id="SSF63451">
    <property type="entry name" value="LEM domain"/>
    <property type="match status" value="1"/>
</dbReference>
<dbReference type="PROSITE" id="PS50954">
    <property type="entry name" value="LEM"/>
    <property type="match status" value="1"/>
</dbReference>
<name>EMR1_CAEEL</name>
<sequence length="166" mass="18118">MDVSQLTDAELRDSLKSHGVSVGPIVATTRKLYEKKLIKLSDGSINNQSNLNDSQFNEDSLIISSSPKKSPPQRVFQNVSAATAAATTSPESDSDDCEESMRYLTEEEMAADRASARQAQSNKGGFLGSTITFTILFVFIAVFAYFLIENAEQLKLVAETNPEDTI</sequence>
<accession>O01971</accession>
<keyword id="KW-0131">Cell cycle</keyword>
<keyword id="KW-0472">Membrane</keyword>
<keyword id="KW-0539">Nucleus</keyword>
<keyword id="KW-1185">Reference proteome</keyword>
<keyword id="KW-0812">Transmembrane</keyword>
<keyword id="KW-1133">Transmembrane helix</keyword>
<organism>
    <name type="scientific">Caenorhabditis elegans</name>
    <dbReference type="NCBI Taxonomy" id="6239"/>
    <lineage>
        <taxon>Eukaryota</taxon>
        <taxon>Metazoa</taxon>
        <taxon>Ecdysozoa</taxon>
        <taxon>Nematoda</taxon>
        <taxon>Chromadorea</taxon>
        <taxon>Rhabditida</taxon>
        <taxon>Rhabditina</taxon>
        <taxon>Rhabditomorpha</taxon>
        <taxon>Rhabditoidea</taxon>
        <taxon>Rhabditidae</taxon>
        <taxon>Peloderinae</taxon>
        <taxon>Caenorhabditis</taxon>
    </lineage>
</organism>